<sequence>MKKLLYITVNSKPEELSASKTVGRAFVNRFLEKHSDFEIEELDLYKCHIPRLEYEYFEKRSCLVNEDAFNKLDKKQQEEVHKIVKLTDQFKEADVYVIAAPMWSMSFPAPLKEYIDCIVMDGKTVDIKDGEKPEGLLNDKPRGAVYIQSSGAKMNVLLKVVMDKGVHYIESIMKFMGIEKFEELLVDGTGTTEEEKNKAIEKAFEKIDSVIDGIW</sequence>
<gene>
    <name evidence="1" type="primary">azoR</name>
    <name type="ordered locus">CLL_A2201</name>
</gene>
<evidence type="ECO:0000255" key="1">
    <source>
        <dbReference type="HAMAP-Rule" id="MF_01216"/>
    </source>
</evidence>
<accession>B2TRR9</accession>
<feature type="chain" id="PRO_1000138971" description="FMN-dependent NADH:quinone oxidoreductase">
    <location>
        <begin position="1"/>
        <end position="215"/>
    </location>
</feature>
<feature type="binding site" evidence="1">
    <location>
        <begin position="17"/>
        <end position="19"/>
    </location>
    <ligand>
        <name>FMN</name>
        <dbReference type="ChEBI" id="CHEBI:58210"/>
    </ligand>
</feature>
<proteinExistence type="inferred from homology"/>
<dbReference type="EC" id="1.6.5.-" evidence="1"/>
<dbReference type="EC" id="1.7.1.17" evidence="1"/>
<dbReference type="EMBL" id="CP001056">
    <property type="protein sequence ID" value="ACD23806.1"/>
    <property type="molecule type" value="Genomic_DNA"/>
</dbReference>
<dbReference type="SMR" id="B2TRR9"/>
<dbReference type="KEGG" id="cbk:CLL_A2201"/>
<dbReference type="PATRIC" id="fig|935198.13.peg.2155"/>
<dbReference type="HOGENOM" id="CLU_088964_3_1_9"/>
<dbReference type="Proteomes" id="UP000001195">
    <property type="component" value="Chromosome"/>
</dbReference>
<dbReference type="GO" id="GO:0009055">
    <property type="term" value="F:electron transfer activity"/>
    <property type="evidence" value="ECO:0007669"/>
    <property type="project" value="UniProtKB-UniRule"/>
</dbReference>
<dbReference type="GO" id="GO:0010181">
    <property type="term" value="F:FMN binding"/>
    <property type="evidence" value="ECO:0007669"/>
    <property type="project" value="UniProtKB-UniRule"/>
</dbReference>
<dbReference type="GO" id="GO:0016652">
    <property type="term" value="F:oxidoreductase activity, acting on NAD(P)H as acceptor"/>
    <property type="evidence" value="ECO:0007669"/>
    <property type="project" value="UniProtKB-UniRule"/>
</dbReference>
<dbReference type="GO" id="GO:0016655">
    <property type="term" value="F:oxidoreductase activity, acting on NAD(P)H, quinone or similar compound as acceptor"/>
    <property type="evidence" value="ECO:0007669"/>
    <property type="project" value="InterPro"/>
</dbReference>
<dbReference type="Gene3D" id="3.40.50.360">
    <property type="match status" value="1"/>
</dbReference>
<dbReference type="HAMAP" id="MF_01216">
    <property type="entry name" value="Azoreductase_type1"/>
    <property type="match status" value="1"/>
</dbReference>
<dbReference type="InterPro" id="IPR003680">
    <property type="entry name" value="Flavodoxin_fold"/>
</dbReference>
<dbReference type="InterPro" id="IPR029039">
    <property type="entry name" value="Flavoprotein-like_sf"/>
</dbReference>
<dbReference type="InterPro" id="IPR050104">
    <property type="entry name" value="FMN-dep_NADH:Q_OxRdtase_AzoR1"/>
</dbReference>
<dbReference type="InterPro" id="IPR023048">
    <property type="entry name" value="NADH:quinone_OxRdtase_FMN_depd"/>
</dbReference>
<dbReference type="PANTHER" id="PTHR43741">
    <property type="entry name" value="FMN-DEPENDENT NADH-AZOREDUCTASE 1"/>
    <property type="match status" value="1"/>
</dbReference>
<dbReference type="PANTHER" id="PTHR43741:SF4">
    <property type="entry name" value="FMN-DEPENDENT NADH:QUINONE OXIDOREDUCTASE"/>
    <property type="match status" value="1"/>
</dbReference>
<dbReference type="Pfam" id="PF02525">
    <property type="entry name" value="Flavodoxin_2"/>
    <property type="match status" value="1"/>
</dbReference>
<dbReference type="SUPFAM" id="SSF52218">
    <property type="entry name" value="Flavoproteins"/>
    <property type="match status" value="1"/>
</dbReference>
<keyword id="KW-0285">Flavoprotein</keyword>
<keyword id="KW-0288">FMN</keyword>
<keyword id="KW-0520">NAD</keyword>
<keyword id="KW-0560">Oxidoreductase</keyword>
<comment type="function">
    <text evidence="1">Quinone reductase that provides resistance to thiol-specific stress caused by electrophilic quinones.</text>
</comment>
<comment type="function">
    <text evidence="1">Also exhibits azoreductase activity. Catalyzes the reductive cleavage of the azo bond in aromatic azo compounds to the corresponding amines.</text>
</comment>
<comment type="catalytic activity">
    <reaction evidence="1">
        <text>2 a quinone + NADH + H(+) = 2 a 1,4-benzosemiquinone + NAD(+)</text>
        <dbReference type="Rhea" id="RHEA:65952"/>
        <dbReference type="ChEBI" id="CHEBI:15378"/>
        <dbReference type="ChEBI" id="CHEBI:57540"/>
        <dbReference type="ChEBI" id="CHEBI:57945"/>
        <dbReference type="ChEBI" id="CHEBI:132124"/>
        <dbReference type="ChEBI" id="CHEBI:134225"/>
    </reaction>
</comment>
<comment type="catalytic activity">
    <reaction evidence="1">
        <text>N,N-dimethyl-1,4-phenylenediamine + anthranilate + 2 NAD(+) = 2-(4-dimethylaminophenyl)diazenylbenzoate + 2 NADH + 2 H(+)</text>
        <dbReference type="Rhea" id="RHEA:55872"/>
        <dbReference type="ChEBI" id="CHEBI:15378"/>
        <dbReference type="ChEBI" id="CHEBI:15783"/>
        <dbReference type="ChEBI" id="CHEBI:16567"/>
        <dbReference type="ChEBI" id="CHEBI:57540"/>
        <dbReference type="ChEBI" id="CHEBI:57945"/>
        <dbReference type="ChEBI" id="CHEBI:71579"/>
        <dbReference type="EC" id="1.7.1.17"/>
    </reaction>
</comment>
<comment type="cofactor">
    <cofactor evidence="1">
        <name>FMN</name>
        <dbReference type="ChEBI" id="CHEBI:58210"/>
    </cofactor>
    <text evidence="1">Binds 1 FMN per subunit.</text>
</comment>
<comment type="subunit">
    <text evidence="1">Homodimer.</text>
</comment>
<comment type="similarity">
    <text evidence="1">Belongs to the azoreductase type 1 family.</text>
</comment>
<protein>
    <recommendedName>
        <fullName evidence="1">FMN-dependent NADH:quinone oxidoreductase</fullName>
        <ecNumber evidence="1">1.6.5.-</ecNumber>
    </recommendedName>
    <alternativeName>
        <fullName evidence="1">Azo-dye reductase</fullName>
    </alternativeName>
    <alternativeName>
        <fullName evidence="1">FMN-dependent NADH-azo compound oxidoreductase</fullName>
    </alternativeName>
    <alternativeName>
        <fullName evidence="1">FMN-dependent NADH-azoreductase</fullName>
        <ecNumber evidence="1">1.7.1.17</ecNumber>
    </alternativeName>
</protein>
<organism>
    <name type="scientific">Clostridium botulinum (strain Eklund 17B / Type B)</name>
    <dbReference type="NCBI Taxonomy" id="935198"/>
    <lineage>
        <taxon>Bacteria</taxon>
        <taxon>Bacillati</taxon>
        <taxon>Bacillota</taxon>
        <taxon>Clostridia</taxon>
        <taxon>Eubacteriales</taxon>
        <taxon>Clostridiaceae</taxon>
        <taxon>Clostridium</taxon>
    </lineage>
</organism>
<reference key="1">
    <citation type="submission" date="2008-04" db="EMBL/GenBank/DDBJ databases">
        <title>Complete sequence of Clostridium botulinum strain Eklund.</title>
        <authorList>
            <person name="Brinkac L.M."/>
            <person name="Brown J.L."/>
            <person name="Bruce D."/>
            <person name="Detter C."/>
            <person name="Munk C."/>
            <person name="Smith L.A."/>
            <person name="Smith T.J."/>
            <person name="Sutton G."/>
            <person name="Brettin T.S."/>
        </authorList>
    </citation>
    <scope>NUCLEOTIDE SEQUENCE [LARGE SCALE GENOMIC DNA]</scope>
    <source>
        <strain>Eklund 17B / Type B</strain>
    </source>
</reference>
<name>AZOR_CLOBB</name>